<proteinExistence type="evidence at transcript level"/>
<keyword id="KW-0067">ATP-binding</keyword>
<keyword id="KW-0963">Cytoplasm</keyword>
<keyword id="KW-0206">Cytoskeleton</keyword>
<keyword id="KW-0378">Hydrolase</keyword>
<keyword id="KW-0547">Nucleotide-binding</keyword>
<sequence length="375" mass="41904">MEDEIAALVIDNGSGMCKAGFAGDDAPRAVFPSIVGRPRHQGIMVGMGQKDSYVGDEAQSKRGILTLKYPIEHGIVSNWDDMEKIWHHTFYNELRVAPEEHPALLTEAPLNPKSNREKMTQIMFETFNTPAFYVAIQAVLSLYASGRTTGIVLDSGDGVTHTVPIYEGYALPHAILRLNLAGRDLTDYLMKILTERGYNYTTTAEREIVRDIKERLCYVALDFEQEIHTASSSSSLEKSYELPDGQVITIGNERFRAPEALFQPSIVGMETCGIHETTFNSIMKCDVDIRKDLYSNIVMSGGTTMYPGIADRMQKEITALAPSSMKIKIVAPPERKYSVWIGGSILASLSTFQQMWISKQEYDENGPSIVYRKCF</sequence>
<evidence type="ECO:0000250" key="1">
    <source>
        <dbReference type="UniProtKB" id="P60010"/>
    </source>
</evidence>
<evidence type="ECO:0000305" key="2"/>
<dbReference type="EC" id="3.6.4.-" evidence="1"/>
<dbReference type="EMBL" id="L21183">
    <property type="protein sequence ID" value="AAA63645.1"/>
    <property type="molecule type" value="mRNA"/>
</dbReference>
<dbReference type="EMBL" id="D49830">
    <property type="protein sequence ID" value="BAA23209.1"/>
    <property type="molecule type" value="mRNA"/>
</dbReference>
<dbReference type="PIR" id="S47897">
    <property type="entry name" value="S47897"/>
</dbReference>
<dbReference type="SMR" id="P43239"/>
<dbReference type="VEuPathDB" id="FungiDB:T552_02557"/>
<dbReference type="GO" id="GO:0005737">
    <property type="term" value="C:cytoplasm"/>
    <property type="evidence" value="ECO:0007669"/>
    <property type="project" value="UniProtKB-KW"/>
</dbReference>
<dbReference type="GO" id="GO:0005856">
    <property type="term" value="C:cytoskeleton"/>
    <property type="evidence" value="ECO:0007669"/>
    <property type="project" value="UniProtKB-SubCell"/>
</dbReference>
<dbReference type="GO" id="GO:0005524">
    <property type="term" value="F:ATP binding"/>
    <property type="evidence" value="ECO:0007669"/>
    <property type="project" value="UniProtKB-KW"/>
</dbReference>
<dbReference type="GO" id="GO:0016787">
    <property type="term" value="F:hydrolase activity"/>
    <property type="evidence" value="ECO:0007669"/>
    <property type="project" value="UniProtKB-KW"/>
</dbReference>
<dbReference type="CDD" id="cd10224">
    <property type="entry name" value="ASKHA_NBD_actin"/>
    <property type="match status" value="1"/>
</dbReference>
<dbReference type="FunFam" id="3.30.420.40:FF:000131">
    <property type="entry name" value="Actin, alpha skeletal muscle"/>
    <property type="match status" value="1"/>
</dbReference>
<dbReference type="FunFam" id="3.30.420.40:FF:000291">
    <property type="entry name" value="Actin, alpha skeletal muscle"/>
    <property type="match status" value="1"/>
</dbReference>
<dbReference type="FunFam" id="3.90.640.10:FF:000047">
    <property type="entry name" value="Actin, alpha skeletal muscle"/>
    <property type="match status" value="1"/>
</dbReference>
<dbReference type="FunFam" id="3.30.420.40:FF:000058">
    <property type="entry name" value="Putative actin-related protein 5"/>
    <property type="match status" value="1"/>
</dbReference>
<dbReference type="Gene3D" id="3.30.420.40">
    <property type="match status" value="2"/>
</dbReference>
<dbReference type="Gene3D" id="3.90.640.10">
    <property type="entry name" value="Actin, Chain A, domain 4"/>
    <property type="match status" value="1"/>
</dbReference>
<dbReference type="InterPro" id="IPR004000">
    <property type="entry name" value="Actin"/>
</dbReference>
<dbReference type="InterPro" id="IPR020902">
    <property type="entry name" value="Actin/actin-like_CS"/>
</dbReference>
<dbReference type="InterPro" id="IPR004001">
    <property type="entry name" value="Actin_CS"/>
</dbReference>
<dbReference type="InterPro" id="IPR043129">
    <property type="entry name" value="ATPase_NBD"/>
</dbReference>
<dbReference type="PANTHER" id="PTHR11937">
    <property type="entry name" value="ACTIN"/>
    <property type="match status" value="1"/>
</dbReference>
<dbReference type="Pfam" id="PF00022">
    <property type="entry name" value="Actin"/>
    <property type="match status" value="1"/>
</dbReference>
<dbReference type="PRINTS" id="PR00190">
    <property type="entry name" value="ACTIN"/>
</dbReference>
<dbReference type="SMART" id="SM00268">
    <property type="entry name" value="ACTIN"/>
    <property type="match status" value="1"/>
</dbReference>
<dbReference type="SUPFAM" id="SSF53067">
    <property type="entry name" value="Actin-like ATPase domain"/>
    <property type="match status" value="2"/>
</dbReference>
<dbReference type="PROSITE" id="PS00406">
    <property type="entry name" value="ACTINS_1"/>
    <property type="match status" value="1"/>
</dbReference>
<dbReference type="PROSITE" id="PS00432">
    <property type="entry name" value="ACTINS_2"/>
    <property type="match status" value="1"/>
</dbReference>
<dbReference type="PROSITE" id="PS01132">
    <property type="entry name" value="ACTINS_ACT_LIKE"/>
    <property type="match status" value="1"/>
</dbReference>
<organism>
    <name type="scientific">Pneumocystis carinii</name>
    <dbReference type="NCBI Taxonomy" id="4754"/>
    <lineage>
        <taxon>Eukaryota</taxon>
        <taxon>Fungi</taxon>
        <taxon>Dikarya</taxon>
        <taxon>Ascomycota</taxon>
        <taxon>Taphrinomycotina</taxon>
        <taxon>Pneumocystomycetes</taxon>
        <taxon>Pneumocystaceae</taxon>
        <taxon>Pneumocystis</taxon>
    </lineage>
</organism>
<reference key="1">
    <citation type="journal article" date="1994" name="Genetics">
        <title>Structure, expression and phylogenetic analysis of the gene encoding actin I in Pneumocystis carinii.</title>
        <authorList>
            <person name="Fletcher L.D."/>
            <person name="McDowell J.M."/>
            <person name="Tidwell R.R."/>
            <person name="Meagher R.B."/>
            <person name="Dykstra C.C."/>
        </authorList>
    </citation>
    <scope>NUCLEOTIDE SEQUENCE [MRNA]</scope>
</reference>
<reference key="2">
    <citation type="journal article" date="1997" name="Parasitol. Int.">
        <title>Genomic structure of the actin-encoding gene of Pneumocystis carinii.</title>
        <authorList>
            <person name="Miyahira Y."/>
            <person name="Hiraoka Y."/>
            <person name="Komatsu N."/>
            <person name="Takeuchi T."/>
            <person name="Aiso S."/>
        </authorList>
    </citation>
    <scope>NUCLEOTIDE SEQUENCE [MRNA]</scope>
</reference>
<feature type="chain" id="PRO_0000088996" description="Actin-1">
    <location>
        <begin position="1"/>
        <end position="375"/>
    </location>
</feature>
<protein>
    <recommendedName>
        <fullName>Actin-1</fullName>
        <ecNumber evidence="1">3.6.4.-</ecNumber>
    </recommendedName>
    <alternativeName>
        <fullName>Actin I</fullName>
    </alternativeName>
</protein>
<accession>P43239</accession>
<name>ACT1_PNECA</name>
<comment type="function">
    <text>Actins are highly conserved proteins that are involved in various types of cell motility and are ubiquitously expressed in all eukaryotic cells.</text>
</comment>
<comment type="catalytic activity">
    <reaction evidence="1">
        <text>ATP + H2O = ADP + phosphate + H(+)</text>
        <dbReference type="Rhea" id="RHEA:13065"/>
        <dbReference type="ChEBI" id="CHEBI:15377"/>
        <dbReference type="ChEBI" id="CHEBI:15378"/>
        <dbReference type="ChEBI" id="CHEBI:30616"/>
        <dbReference type="ChEBI" id="CHEBI:43474"/>
        <dbReference type="ChEBI" id="CHEBI:456216"/>
    </reaction>
</comment>
<comment type="subcellular location">
    <subcellularLocation>
        <location>Cytoplasm</location>
        <location>Cytoskeleton</location>
    </subcellularLocation>
</comment>
<comment type="similarity">
    <text evidence="2">Belongs to the actin family.</text>
</comment>